<evidence type="ECO:0000255" key="1">
    <source>
        <dbReference type="HAMAP-Rule" id="MF_00446"/>
    </source>
</evidence>
<gene>
    <name evidence="1" type="primary">panD</name>
    <name type="ordered locus">ECP_0139</name>
</gene>
<reference key="1">
    <citation type="journal article" date="2006" name="Mol. Microbiol.">
        <title>Role of pathogenicity island-associated integrases in the genome plasticity of uropathogenic Escherichia coli strain 536.</title>
        <authorList>
            <person name="Hochhut B."/>
            <person name="Wilde C."/>
            <person name="Balling G."/>
            <person name="Middendorf B."/>
            <person name="Dobrindt U."/>
            <person name="Brzuszkiewicz E."/>
            <person name="Gottschalk G."/>
            <person name="Carniel E."/>
            <person name="Hacker J."/>
        </authorList>
    </citation>
    <scope>NUCLEOTIDE SEQUENCE [LARGE SCALE GENOMIC DNA]</scope>
    <source>
        <strain>536 / UPEC</strain>
    </source>
</reference>
<organism>
    <name type="scientific">Escherichia coli O6:K15:H31 (strain 536 / UPEC)</name>
    <dbReference type="NCBI Taxonomy" id="362663"/>
    <lineage>
        <taxon>Bacteria</taxon>
        <taxon>Pseudomonadati</taxon>
        <taxon>Pseudomonadota</taxon>
        <taxon>Gammaproteobacteria</taxon>
        <taxon>Enterobacterales</taxon>
        <taxon>Enterobacteriaceae</taxon>
        <taxon>Escherichia</taxon>
    </lineage>
</organism>
<sequence length="126" mass="13847">MIRTMLQGKLHRVKVTHADLHYEGSCAIDQDFLDAAGILENEAIDIWNVTNGKRFSTYAIAAERGSRIISVNGAAAHCASVGDIVIIASFVNMPDEEARTWRPNVAYFEGDNEMKRTAKAIPVQVA</sequence>
<feature type="chain" id="PRO_0000306971" description="Aspartate 1-decarboxylase beta chain" evidence="1">
    <location>
        <begin position="1"/>
        <end position="24"/>
    </location>
</feature>
<feature type="chain" id="PRO_0000306972" description="Aspartate 1-decarboxylase alpha chain" evidence="1">
    <location>
        <begin position="25"/>
        <end position="126"/>
    </location>
</feature>
<feature type="active site" description="Schiff-base intermediate with substrate; via pyruvic acid" evidence="1">
    <location>
        <position position="25"/>
    </location>
</feature>
<feature type="active site" description="Proton donor" evidence="1">
    <location>
        <position position="58"/>
    </location>
</feature>
<feature type="binding site" evidence="1">
    <location>
        <position position="57"/>
    </location>
    <ligand>
        <name>substrate</name>
    </ligand>
</feature>
<feature type="binding site" evidence="1">
    <location>
        <begin position="73"/>
        <end position="75"/>
    </location>
    <ligand>
        <name>substrate</name>
    </ligand>
</feature>
<feature type="modified residue" description="Pyruvic acid (Ser)" evidence="1">
    <location>
        <position position="25"/>
    </location>
</feature>
<comment type="function">
    <text evidence="1">Catalyzes the pyruvoyl-dependent decarboxylation of aspartate to produce beta-alanine.</text>
</comment>
<comment type="catalytic activity">
    <reaction evidence="1">
        <text>L-aspartate + H(+) = beta-alanine + CO2</text>
        <dbReference type="Rhea" id="RHEA:19497"/>
        <dbReference type="ChEBI" id="CHEBI:15378"/>
        <dbReference type="ChEBI" id="CHEBI:16526"/>
        <dbReference type="ChEBI" id="CHEBI:29991"/>
        <dbReference type="ChEBI" id="CHEBI:57966"/>
        <dbReference type="EC" id="4.1.1.11"/>
    </reaction>
</comment>
<comment type="cofactor">
    <cofactor evidence="1">
        <name>pyruvate</name>
        <dbReference type="ChEBI" id="CHEBI:15361"/>
    </cofactor>
    <text evidence="1">Binds 1 pyruvoyl group covalently per subunit.</text>
</comment>
<comment type="pathway">
    <text evidence="1">Cofactor biosynthesis; (R)-pantothenate biosynthesis; beta-alanine from L-aspartate: step 1/1.</text>
</comment>
<comment type="subunit">
    <text evidence="1">Heterooctamer of four alpha and four beta subunits.</text>
</comment>
<comment type="subcellular location">
    <subcellularLocation>
        <location evidence="1">Cytoplasm</location>
    </subcellularLocation>
</comment>
<comment type="PTM">
    <text evidence="1">Is synthesized initially as an inactive proenzyme, which is activated by self-cleavage at a specific serine bond to produce a beta-subunit with a hydroxyl group at its C-terminus and an alpha-subunit with a pyruvoyl group at its N-terminus.</text>
</comment>
<comment type="similarity">
    <text evidence="1">Belongs to the PanD family.</text>
</comment>
<name>PAND_ECOL5</name>
<keyword id="KW-0068">Autocatalytic cleavage</keyword>
<keyword id="KW-0963">Cytoplasm</keyword>
<keyword id="KW-0210">Decarboxylase</keyword>
<keyword id="KW-0456">Lyase</keyword>
<keyword id="KW-0566">Pantothenate biosynthesis</keyword>
<keyword id="KW-0670">Pyruvate</keyword>
<keyword id="KW-0704">Schiff base</keyword>
<keyword id="KW-0865">Zymogen</keyword>
<accession>Q0TLK2</accession>
<dbReference type="EC" id="4.1.1.11" evidence="1"/>
<dbReference type="EMBL" id="CP000247">
    <property type="protein sequence ID" value="ABG68179.1"/>
    <property type="molecule type" value="Genomic_DNA"/>
</dbReference>
<dbReference type="RefSeq" id="WP_000621507.1">
    <property type="nucleotide sequence ID" value="NC_008253.1"/>
</dbReference>
<dbReference type="SMR" id="Q0TLK2"/>
<dbReference type="KEGG" id="ecp:ECP_0139"/>
<dbReference type="HOGENOM" id="CLU_115305_2_1_6"/>
<dbReference type="UniPathway" id="UPA00028">
    <property type="reaction ID" value="UER00002"/>
</dbReference>
<dbReference type="Proteomes" id="UP000009182">
    <property type="component" value="Chromosome"/>
</dbReference>
<dbReference type="GO" id="GO:0005829">
    <property type="term" value="C:cytosol"/>
    <property type="evidence" value="ECO:0007669"/>
    <property type="project" value="TreeGrafter"/>
</dbReference>
<dbReference type="GO" id="GO:0004068">
    <property type="term" value="F:aspartate 1-decarboxylase activity"/>
    <property type="evidence" value="ECO:0007669"/>
    <property type="project" value="UniProtKB-UniRule"/>
</dbReference>
<dbReference type="GO" id="GO:0006523">
    <property type="term" value="P:alanine biosynthetic process"/>
    <property type="evidence" value="ECO:0007669"/>
    <property type="project" value="InterPro"/>
</dbReference>
<dbReference type="GO" id="GO:0015940">
    <property type="term" value="P:pantothenate biosynthetic process"/>
    <property type="evidence" value="ECO:0007669"/>
    <property type="project" value="UniProtKB-UniRule"/>
</dbReference>
<dbReference type="CDD" id="cd06919">
    <property type="entry name" value="Asp_decarbox"/>
    <property type="match status" value="1"/>
</dbReference>
<dbReference type="FunFam" id="2.40.40.20:FF:000004">
    <property type="entry name" value="Aspartate 1-decarboxylase"/>
    <property type="match status" value="1"/>
</dbReference>
<dbReference type="Gene3D" id="2.40.40.20">
    <property type="match status" value="1"/>
</dbReference>
<dbReference type="HAMAP" id="MF_00446">
    <property type="entry name" value="PanD"/>
    <property type="match status" value="1"/>
</dbReference>
<dbReference type="InterPro" id="IPR009010">
    <property type="entry name" value="Asp_de-COase-like_dom_sf"/>
</dbReference>
<dbReference type="InterPro" id="IPR003190">
    <property type="entry name" value="Asp_decarbox"/>
</dbReference>
<dbReference type="NCBIfam" id="TIGR00223">
    <property type="entry name" value="panD"/>
    <property type="match status" value="1"/>
</dbReference>
<dbReference type="PANTHER" id="PTHR21012">
    <property type="entry name" value="ASPARTATE 1-DECARBOXYLASE"/>
    <property type="match status" value="1"/>
</dbReference>
<dbReference type="PANTHER" id="PTHR21012:SF0">
    <property type="entry name" value="ASPARTATE 1-DECARBOXYLASE"/>
    <property type="match status" value="1"/>
</dbReference>
<dbReference type="Pfam" id="PF02261">
    <property type="entry name" value="Asp_decarbox"/>
    <property type="match status" value="1"/>
</dbReference>
<dbReference type="PIRSF" id="PIRSF006246">
    <property type="entry name" value="Asp_decarbox"/>
    <property type="match status" value="1"/>
</dbReference>
<dbReference type="SUPFAM" id="SSF50692">
    <property type="entry name" value="ADC-like"/>
    <property type="match status" value="1"/>
</dbReference>
<proteinExistence type="inferred from homology"/>
<protein>
    <recommendedName>
        <fullName evidence="1">Aspartate 1-decarboxylase</fullName>
        <ecNumber evidence="1">4.1.1.11</ecNumber>
    </recommendedName>
    <alternativeName>
        <fullName evidence="1">Aspartate alpha-decarboxylase</fullName>
    </alternativeName>
    <component>
        <recommendedName>
            <fullName evidence="1">Aspartate 1-decarboxylase beta chain</fullName>
        </recommendedName>
    </component>
    <component>
        <recommendedName>
            <fullName evidence="1">Aspartate 1-decarboxylase alpha chain</fullName>
        </recommendedName>
    </component>
</protein>